<accession>Q9W638</accession>
<accession>Q9PWJ6</accession>
<reference key="1">
    <citation type="journal article" date="1999" name="Biochim. Biophys. Acta">
        <title>Molecular cloning and expression of Xenopus laevis Requiem cDNA.</title>
        <authorList>
            <person name="Konishi M."/>
            <person name="Hiraoka Y."/>
            <person name="Ogawa M."/>
            <person name="Sakai Y."/>
            <person name="Ishii H."/>
            <person name="Aiso S."/>
        </authorList>
    </citation>
    <scope>NUCLEOTIDE SEQUENCE [MRNA]</scope>
    <source>
        <tissue>Ovary</tissue>
    </source>
</reference>
<keyword id="KW-0053">Apoptosis</keyword>
<keyword id="KW-0963">Cytoplasm</keyword>
<keyword id="KW-0479">Metal-binding</keyword>
<keyword id="KW-0539">Nucleus</keyword>
<keyword id="KW-1185">Reference proteome</keyword>
<keyword id="KW-0677">Repeat</keyword>
<keyword id="KW-0804">Transcription</keyword>
<keyword id="KW-0805">Transcription regulation</keyword>
<keyword id="KW-0862">Zinc</keyword>
<keyword id="KW-0863">Zinc-finger</keyword>
<evidence type="ECO:0000250" key="1"/>
<evidence type="ECO:0000255" key="2">
    <source>
        <dbReference type="PROSITE-ProRule" id="PRU00042"/>
    </source>
</evidence>
<evidence type="ECO:0000255" key="3">
    <source>
        <dbReference type="PROSITE-ProRule" id="PRU00146"/>
    </source>
</evidence>
<evidence type="ECO:0000256" key="4">
    <source>
        <dbReference type="SAM" id="MobiDB-lite"/>
    </source>
</evidence>
<evidence type="ECO:0000305" key="5"/>
<comment type="function">
    <text>May be a transcription factor required for the apoptosis response following survival factor withdrawal from myeloid cells. Might also have a role in the development and maturation of lymphoid cells.</text>
</comment>
<comment type="subcellular location">
    <subcellularLocation>
        <location evidence="1">Cytoplasm</location>
    </subcellularLocation>
    <subcellularLocation>
        <location evidence="1">Nucleus</location>
    </subcellularLocation>
</comment>
<comment type="similarity">
    <text evidence="5">Belongs to the requiem/DPF family.</text>
</comment>
<feature type="chain" id="PRO_0000168152" description="Zinc finger protein ubi-d4 A">
    <location>
        <begin position="1"/>
        <end position="388"/>
    </location>
</feature>
<feature type="zinc finger region" description="C2H2-type" evidence="2">
    <location>
        <begin position="205"/>
        <end position="228"/>
    </location>
</feature>
<feature type="zinc finger region" description="PHD-type 1" evidence="3">
    <location>
        <begin position="269"/>
        <end position="329"/>
    </location>
</feature>
<feature type="zinc finger region" description="PHD-type 2" evidence="3">
    <location>
        <begin position="326"/>
        <end position="376"/>
    </location>
</feature>
<feature type="region of interest" description="Disordered" evidence="4">
    <location>
        <begin position="60"/>
        <end position="190"/>
    </location>
</feature>
<feature type="region of interest" description="Disordered" evidence="4">
    <location>
        <begin position="233"/>
        <end position="264"/>
    </location>
</feature>
<feature type="compositionally biased region" description="Basic and acidic residues" evidence="4">
    <location>
        <begin position="97"/>
        <end position="107"/>
    </location>
</feature>
<feature type="compositionally biased region" description="Basic and acidic residues" evidence="4">
    <location>
        <begin position="123"/>
        <end position="137"/>
    </location>
</feature>
<feature type="compositionally biased region" description="Acidic residues" evidence="4">
    <location>
        <begin position="156"/>
        <end position="170"/>
    </location>
</feature>
<feature type="compositionally biased region" description="Basic and acidic residues" evidence="4">
    <location>
        <begin position="251"/>
        <end position="262"/>
    </location>
</feature>
<feature type="sequence conflict" description="In Ref. 1; BAA77570." evidence="5" ref="1">
    <location>
        <begin position="339"/>
        <end position="340"/>
    </location>
</feature>
<sequence length="388" mass="43907">MAAAVEKILGEQYYKDAMEQCHNYNARLCAERSVRLPFLDSQTRVAQSNCYIWMEKRHRGPGSAPGQLYTYPSRRWRKKRRAHPPEDPRLSFPSLKPDPEQMLKKEGVIPPDGSSLEALLRSDPIEKRIMPDSRDDDSLTEFPPLSRSARKRILEPDDFLDDLDDEDYEEDTPKKRGKGKAKGKGIGSARKKLDAAALDDRDKPYACDICGKRYKNRPGLSYHYAHSHLVDEEGAGAEDKEDSQPPTPIMHRPEEQKSKKGPDGIALPNNYCDFCLGDSKINKKTNQSEELVSCSDCGRSGHPSCLQFTAVMMAAVKTYRWQCIECKCCNICGTSENDDQLLFCDDCDRGYHMYCLVPPVAEPPEGSWSCHLCLDLLKDKASIYQNQS</sequence>
<protein>
    <recommendedName>
        <fullName>Zinc finger protein ubi-d4 A</fullName>
    </recommendedName>
    <alternativeName>
        <fullName>Apoptosis response zinc finger protein A</fullName>
    </alternativeName>
    <alternativeName>
        <fullName>Protein requiem A</fullName>
        <shortName>xReq A</shortName>
    </alternativeName>
</protein>
<gene>
    <name type="primary">req-a</name>
    <name type="synonym">req1</name>
</gene>
<name>REQUA_XENLA</name>
<organism>
    <name type="scientific">Xenopus laevis</name>
    <name type="common">African clawed frog</name>
    <dbReference type="NCBI Taxonomy" id="8355"/>
    <lineage>
        <taxon>Eukaryota</taxon>
        <taxon>Metazoa</taxon>
        <taxon>Chordata</taxon>
        <taxon>Craniata</taxon>
        <taxon>Vertebrata</taxon>
        <taxon>Euteleostomi</taxon>
        <taxon>Amphibia</taxon>
        <taxon>Batrachia</taxon>
        <taxon>Anura</taxon>
        <taxon>Pipoidea</taxon>
        <taxon>Pipidae</taxon>
        <taxon>Xenopodinae</taxon>
        <taxon>Xenopus</taxon>
        <taxon>Xenopus</taxon>
    </lineage>
</organism>
<dbReference type="EMBL" id="AB021741">
    <property type="protein sequence ID" value="BAA77574.1"/>
    <property type="molecule type" value="mRNA"/>
</dbReference>
<dbReference type="EMBL" id="AB021737">
    <property type="protein sequence ID" value="BAA77570.1"/>
    <property type="molecule type" value="mRNA"/>
</dbReference>
<dbReference type="RefSeq" id="NP_001079117.1">
    <property type="nucleotide sequence ID" value="NM_001085648.1"/>
</dbReference>
<dbReference type="RefSeq" id="XP_018111885.1">
    <property type="nucleotide sequence ID" value="XM_018256396.1"/>
</dbReference>
<dbReference type="SMR" id="Q9W638"/>
<dbReference type="GeneID" id="373651"/>
<dbReference type="KEGG" id="xla:373651"/>
<dbReference type="AGR" id="Xenbase:XB-GENE-945342"/>
<dbReference type="CTD" id="373651"/>
<dbReference type="Xenbase" id="XB-GENE-945342">
    <property type="gene designation" value="dpf2.L"/>
</dbReference>
<dbReference type="OMA" id="GMGMDWD"/>
<dbReference type="OrthoDB" id="1903104at2759"/>
<dbReference type="Proteomes" id="UP000186698">
    <property type="component" value="Chromosome 4L"/>
</dbReference>
<dbReference type="Bgee" id="373651">
    <property type="expression patterns" value="Expressed in blastula and 19 other cell types or tissues"/>
</dbReference>
<dbReference type="GO" id="GO:0005737">
    <property type="term" value="C:cytoplasm"/>
    <property type="evidence" value="ECO:0007669"/>
    <property type="project" value="UniProtKB-SubCell"/>
</dbReference>
<dbReference type="GO" id="GO:0071565">
    <property type="term" value="C:nBAF complex"/>
    <property type="evidence" value="ECO:0000318"/>
    <property type="project" value="GO_Central"/>
</dbReference>
<dbReference type="GO" id="GO:0008270">
    <property type="term" value="F:zinc ion binding"/>
    <property type="evidence" value="ECO:0007669"/>
    <property type="project" value="UniProtKB-KW"/>
</dbReference>
<dbReference type="GO" id="GO:0006915">
    <property type="term" value="P:apoptotic process"/>
    <property type="evidence" value="ECO:0007669"/>
    <property type="project" value="UniProtKB-KW"/>
</dbReference>
<dbReference type="GO" id="GO:0007399">
    <property type="term" value="P:nervous system development"/>
    <property type="evidence" value="ECO:0000318"/>
    <property type="project" value="GO_Central"/>
</dbReference>
<dbReference type="CDD" id="cd15691">
    <property type="entry name" value="PHD1_DPF2_like"/>
    <property type="match status" value="1"/>
</dbReference>
<dbReference type="CDD" id="cd15530">
    <property type="entry name" value="PHD2_d4"/>
    <property type="match status" value="1"/>
</dbReference>
<dbReference type="FunFam" id="3.30.40.10:FF:000005">
    <property type="entry name" value="zinc finger protein isoform X1"/>
    <property type="match status" value="1"/>
</dbReference>
<dbReference type="Gene3D" id="3.30.40.10">
    <property type="entry name" value="Zinc/RING finger domain, C3HC4 (zinc finger)"/>
    <property type="match status" value="1"/>
</dbReference>
<dbReference type="InterPro" id="IPR025750">
    <property type="entry name" value="DPF1-3_N"/>
</dbReference>
<dbReference type="InterPro" id="IPR036236">
    <property type="entry name" value="Znf_C2H2_sf"/>
</dbReference>
<dbReference type="InterPro" id="IPR013087">
    <property type="entry name" value="Znf_C2H2_type"/>
</dbReference>
<dbReference type="InterPro" id="IPR011011">
    <property type="entry name" value="Znf_FYVE_PHD"/>
</dbReference>
<dbReference type="InterPro" id="IPR001965">
    <property type="entry name" value="Znf_PHD"/>
</dbReference>
<dbReference type="InterPro" id="IPR019787">
    <property type="entry name" value="Znf_PHD-finger"/>
</dbReference>
<dbReference type="InterPro" id="IPR013083">
    <property type="entry name" value="Znf_RING/FYVE/PHD"/>
</dbReference>
<dbReference type="PANTHER" id="PTHR45888">
    <property type="entry name" value="HL01030P-RELATED"/>
    <property type="match status" value="1"/>
</dbReference>
<dbReference type="PANTHER" id="PTHR45888:SF7">
    <property type="entry name" value="ZINC FINGER PROTEIN UBI-D4"/>
    <property type="match status" value="1"/>
</dbReference>
<dbReference type="Pfam" id="PF14051">
    <property type="entry name" value="DPF1-3_N"/>
    <property type="match status" value="1"/>
</dbReference>
<dbReference type="Pfam" id="PF00628">
    <property type="entry name" value="PHD"/>
    <property type="match status" value="2"/>
</dbReference>
<dbReference type="SMART" id="SM00249">
    <property type="entry name" value="PHD"/>
    <property type="match status" value="2"/>
</dbReference>
<dbReference type="SMART" id="SM00355">
    <property type="entry name" value="ZnF_C2H2"/>
    <property type="match status" value="1"/>
</dbReference>
<dbReference type="SUPFAM" id="SSF57667">
    <property type="entry name" value="beta-beta-alpha zinc fingers"/>
    <property type="match status" value="1"/>
</dbReference>
<dbReference type="SUPFAM" id="SSF57903">
    <property type="entry name" value="FYVE/PHD zinc finger"/>
    <property type="match status" value="2"/>
</dbReference>
<dbReference type="PROSITE" id="PS01359">
    <property type="entry name" value="ZF_PHD_1"/>
    <property type="match status" value="1"/>
</dbReference>
<dbReference type="PROSITE" id="PS50016">
    <property type="entry name" value="ZF_PHD_2"/>
    <property type="match status" value="2"/>
</dbReference>
<dbReference type="PROSITE" id="PS00028">
    <property type="entry name" value="ZINC_FINGER_C2H2_1"/>
    <property type="match status" value="1"/>
</dbReference>
<dbReference type="PROSITE" id="PS50157">
    <property type="entry name" value="ZINC_FINGER_C2H2_2"/>
    <property type="match status" value="1"/>
</dbReference>
<proteinExistence type="evidence at transcript level"/>